<name>RNY_CLOPS</name>
<protein>
    <recommendedName>
        <fullName evidence="1">Ribonuclease Y</fullName>
        <shortName evidence="1">RNase Y</shortName>
        <ecNumber evidence="1">3.1.-.-</ecNumber>
    </recommendedName>
</protein>
<feature type="chain" id="PRO_0000344854" description="Ribonuclease Y">
    <location>
        <begin position="1"/>
        <end position="511"/>
    </location>
</feature>
<feature type="transmembrane region" description="Helical" evidence="1">
    <location>
        <begin position="3"/>
        <end position="23"/>
    </location>
</feature>
<feature type="domain" description="KH" evidence="1">
    <location>
        <begin position="201"/>
        <end position="286"/>
    </location>
</feature>
<feature type="domain" description="HD" evidence="2">
    <location>
        <begin position="327"/>
        <end position="420"/>
    </location>
</feature>
<accession>Q0SSE8</accession>
<reference key="1">
    <citation type="journal article" date="2006" name="Genome Res.">
        <title>Skewed genomic variability in strains of the toxigenic bacterial pathogen, Clostridium perfringens.</title>
        <authorList>
            <person name="Myers G.S.A."/>
            <person name="Rasko D.A."/>
            <person name="Cheung J.K."/>
            <person name="Ravel J."/>
            <person name="Seshadri R."/>
            <person name="DeBoy R.T."/>
            <person name="Ren Q."/>
            <person name="Varga J."/>
            <person name="Awad M.M."/>
            <person name="Brinkac L.M."/>
            <person name="Daugherty S.C."/>
            <person name="Haft D.H."/>
            <person name="Dodson R.J."/>
            <person name="Madupu R."/>
            <person name="Nelson W.C."/>
            <person name="Rosovitz M.J."/>
            <person name="Sullivan S.A."/>
            <person name="Khouri H."/>
            <person name="Dimitrov G.I."/>
            <person name="Watkins K.L."/>
            <person name="Mulligan S."/>
            <person name="Benton J."/>
            <person name="Radune D."/>
            <person name="Fisher D.J."/>
            <person name="Atkins H.S."/>
            <person name="Hiscox T."/>
            <person name="Jost B.H."/>
            <person name="Billington S.J."/>
            <person name="Songer J.G."/>
            <person name="McClane B.A."/>
            <person name="Titball R.W."/>
            <person name="Rood J.I."/>
            <person name="Melville S.B."/>
            <person name="Paulsen I.T."/>
        </authorList>
    </citation>
    <scope>NUCLEOTIDE SEQUENCE [LARGE SCALE GENOMIC DNA]</scope>
    <source>
        <strain>SM101 / Type A</strain>
    </source>
</reference>
<organism>
    <name type="scientific">Clostridium perfringens (strain SM101 / Type A)</name>
    <dbReference type="NCBI Taxonomy" id="289380"/>
    <lineage>
        <taxon>Bacteria</taxon>
        <taxon>Bacillati</taxon>
        <taxon>Bacillota</taxon>
        <taxon>Clostridia</taxon>
        <taxon>Eubacteriales</taxon>
        <taxon>Clostridiaceae</taxon>
        <taxon>Clostridium</taxon>
    </lineage>
</organism>
<sequence>MVVGILIGIIILGVVGFIQYTLIEKASKNRVESLEKEASLALEEAKREAESTKKEAILEAKEEVHKLRSDLDKEIRDRRNEIQRFERRLIQREESLDKKGEMLEKREDSINKKSIEIQELEERVQSLYGEQRAELERISNLSSEDARTLLLDEVRREIKHESAMLIKELETKAKEEADKKSREIITNAIQRCAADHVSETTVHVVALPNDEMKGRIIGREGRNIRTLETLTGVDLIIDDTPEAVILSSFDPIRREVARIALEKLIVDGRIHPARIEEMVERAIKDVENDIKEEGEQATFETGVHGLHPEIIKLLGRLKYRTSYGQNVLKHSIEVSYLAGLMASELGLDVNLARRAGLLHDIGKGVDQEYEGPHAVIGGELAKKYHESPAVVNAIAAHHGDTEMQTLEAVLVQAADAISAARPGARRETLEAYIKRLEKLEEIATSYEGVEKSYAIQAGREIRIMVKPDQVDDAGAIEMARNIVKKIEEQLEYPGQIKINVIRETRAVDYAK</sequence>
<evidence type="ECO:0000255" key="1">
    <source>
        <dbReference type="HAMAP-Rule" id="MF_00335"/>
    </source>
</evidence>
<evidence type="ECO:0000255" key="2">
    <source>
        <dbReference type="PROSITE-ProRule" id="PRU01175"/>
    </source>
</evidence>
<dbReference type="EC" id="3.1.-.-" evidence="1"/>
<dbReference type="EMBL" id="CP000312">
    <property type="protein sequence ID" value="ABG87479.1"/>
    <property type="molecule type" value="Genomic_DNA"/>
</dbReference>
<dbReference type="RefSeq" id="WP_011592580.1">
    <property type="nucleotide sequence ID" value="NC_008262.1"/>
</dbReference>
<dbReference type="SMR" id="Q0SSE8"/>
<dbReference type="KEGG" id="cpr:CPR_1644"/>
<dbReference type="Proteomes" id="UP000001824">
    <property type="component" value="Chromosome"/>
</dbReference>
<dbReference type="GO" id="GO:0005886">
    <property type="term" value="C:plasma membrane"/>
    <property type="evidence" value="ECO:0007669"/>
    <property type="project" value="UniProtKB-SubCell"/>
</dbReference>
<dbReference type="GO" id="GO:0003723">
    <property type="term" value="F:RNA binding"/>
    <property type="evidence" value="ECO:0007669"/>
    <property type="project" value="UniProtKB-UniRule"/>
</dbReference>
<dbReference type="GO" id="GO:0004521">
    <property type="term" value="F:RNA endonuclease activity"/>
    <property type="evidence" value="ECO:0007669"/>
    <property type="project" value="UniProtKB-UniRule"/>
</dbReference>
<dbReference type="GO" id="GO:0006402">
    <property type="term" value="P:mRNA catabolic process"/>
    <property type="evidence" value="ECO:0007669"/>
    <property type="project" value="UniProtKB-UniRule"/>
</dbReference>
<dbReference type="CDD" id="cd00077">
    <property type="entry name" value="HDc"/>
    <property type="match status" value="1"/>
</dbReference>
<dbReference type="CDD" id="cd22431">
    <property type="entry name" value="KH-I_RNaseY"/>
    <property type="match status" value="1"/>
</dbReference>
<dbReference type="FunFam" id="1.10.3210.10:FF:000003">
    <property type="entry name" value="Ribonuclease Y"/>
    <property type="match status" value="1"/>
</dbReference>
<dbReference type="FunFam" id="3.30.1370.10:FF:000006">
    <property type="entry name" value="Ribonuclease Y"/>
    <property type="match status" value="1"/>
</dbReference>
<dbReference type="Gene3D" id="1.10.3210.10">
    <property type="entry name" value="Hypothetical protein af1432"/>
    <property type="match status" value="1"/>
</dbReference>
<dbReference type="Gene3D" id="3.30.1370.10">
    <property type="entry name" value="K Homology domain, type 1"/>
    <property type="match status" value="1"/>
</dbReference>
<dbReference type="HAMAP" id="MF_00335">
    <property type="entry name" value="RNase_Y"/>
    <property type="match status" value="1"/>
</dbReference>
<dbReference type="InterPro" id="IPR003607">
    <property type="entry name" value="HD/PDEase_dom"/>
</dbReference>
<dbReference type="InterPro" id="IPR006674">
    <property type="entry name" value="HD_domain"/>
</dbReference>
<dbReference type="InterPro" id="IPR006675">
    <property type="entry name" value="HDIG_dom"/>
</dbReference>
<dbReference type="InterPro" id="IPR004087">
    <property type="entry name" value="KH_dom"/>
</dbReference>
<dbReference type="InterPro" id="IPR004088">
    <property type="entry name" value="KH_dom_type_1"/>
</dbReference>
<dbReference type="InterPro" id="IPR036612">
    <property type="entry name" value="KH_dom_type_1_sf"/>
</dbReference>
<dbReference type="InterPro" id="IPR017705">
    <property type="entry name" value="Ribonuclease_Y"/>
</dbReference>
<dbReference type="InterPro" id="IPR022711">
    <property type="entry name" value="RNase_Y_N"/>
</dbReference>
<dbReference type="NCBIfam" id="TIGR00277">
    <property type="entry name" value="HDIG"/>
    <property type="match status" value="1"/>
</dbReference>
<dbReference type="NCBIfam" id="TIGR03319">
    <property type="entry name" value="RNase_Y"/>
    <property type="match status" value="1"/>
</dbReference>
<dbReference type="PANTHER" id="PTHR12826">
    <property type="entry name" value="RIBONUCLEASE Y"/>
    <property type="match status" value="1"/>
</dbReference>
<dbReference type="PANTHER" id="PTHR12826:SF15">
    <property type="entry name" value="RIBONUCLEASE Y"/>
    <property type="match status" value="1"/>
</dbReference>
<dbReference type="Pfam" id="PF01966">
    <property type="entry name" value="HD"/>
    <property type="match status" value="1"/>
</dbReference>
<dbReference type="Pfam" id="PF00013">
    <property type="entry name" value="KH_1"/>
    <property type="match status" value="1"/>
</dbReference>
<dbReference type="Pfam" id="PF12072">
    <property type="entry name" value="RNase_Y_N"/>
    <property type="match status" value="1"/>
</dbReference>
<dbReference type="SMART" id="SM00471">
    <property type="entry name" value="HDc"/>
    <property type="match status" value="1"/>
</dbReference>
<dbReference type="SMART" id="SM00322">
    <property type="entry name" value="KH"/>
    <property type="match status" value="1"/>
</dbReference>
<dbReference type="SUPFAM" id="SSF54791">
    <property type="entry name" value="Eukaryotic type KH-domain (KH-domain type I)"/>
    <property type="match status" value="1"/>
</dbReference>
<dbReference type="SUPFAM" id="SSF109604">
    <property type="entry name" value="HD-domain/PDEase-like"/>
    <property type="match status" value="1"/>
</dbReference>
<dbReference type="PROSITE" id="PS51831">
    <property type="entry name" value="HD"/>
    <property type="match status" value="1"/>
</dbReference>
<dbReference type="PROSITE" id="PS50084">
    <property type="entry name" value="KH_TYPE_1"/>
    <property type="match status" value="1"/>
</dbReference>
<gene>
    <name evidence="1" type="primary">rny</name>
    <name type="ordered locus">CPR_1644</name>
</gene>
<keyword id="KW-1003">Cell membrane</keyword>
<keyword id="KW-0255">Endonuclease</keyword>
<keyword id="KW-0378">Hydrolase</keyword>
<keyword id="KW-0472">Membrane</keyword>
<keyword id="KW-0540">Nuclease</keyword>
<keyword id="KW-0694">RNA-binding</keyword>
<keyword id="KW-0812">Transmembrane</keyword>
<keyword id="KW-1133">Transmembrane helix</keyword>
<comment type="function">
    <text evidence="1">Endoribonuclease that initiates mRNA decay.</text>
</comment>
<comment type="subcellular location">
    <subcellularLocation>
        <location evidence="1">Cell membrane</location>
        <topology evidence="1">Single-pass membrane protein</topology>
    </subcellularLocation>
</comment>
<comment type="similarity">
    <text evidence="1">Belongs to the RNase Y family.</text>
</comment>
<proteinExistence type="inferred from homology"/>